<sequence>MTKIERALISVSDKTGILEFARGLAAHGVEILSTGGTAKLLADNNVPVIEVADYTGFPEMLDGRVKTLHPKIHGGILGRRDLPEHVAKMAEHGIGNIDLVCVNLYPFEATIAKEGCALEDAIENIDIGGPTMVRSAAKNWAHVAIVTDAADYPALLEEMGANAGALSRATRFDLSRKAFTHTAAYDGAISNYLTAVQADQGLAGEPVRTLFPTRLNLQVVKVQDMRYGENPHQSAAFYRDLDPAPGTLAHYRQLQGKELSYNNIADSDAAWEAVKTFDDPACVIVKHANPCGVAVAADPLSAYRLAFATDTTSAFGGIIAFNREVDAATVEAVSAQFLEVLIAPAFTDDAKALIAAKKNVRVLEVPVEAGANRFELKRVGGGLLVQTPDIKNVTLDELKVVTKAQPTRQQLADLLFAWRVAKFVKSNAIVFAAGGQTAGIGAGQMSRVDSTRIAARKAQDAGLSLKNAVAASDAFFPFRDGVDVIAEQGISAIIQPGGSMRDEEVIKAADEHGIAMVFTGNRHFRH</sequence>
<dbReference type="EC" id="2.1.2.3" evidence="1"/>
<dbReference type="EC" id="3.5.4.10" evidence="1"/>
<dbReference type="EMBL" id="CP001154">
    <property type="protein sequence ID" value="ACO76186.1"/>
    <property type="molecule type" value="Genomic_DNA"/>
</dbReference>
<dbReference type="RefSeq" id="WP_012698649.1">
    <property type="nucleotide sequence ID" value="NC_012559.1"/>
</dbReference>
<dbReference type="SMR" id="C1D6F1"/>
<dbReference type="STRING" id="557598.LHK_03208"/>
<dbReference type="GeneID" id="75108387"/>
<dbReference type="KEGG" id="lhk:LHK_03208"/>
<dbReference type="eggNOG" id="COG0138">
    <property type="taxonomic scope" value="Bacteria"/>
</dbReference>
<dbReference type="HOGENOM" id="CLU_016316_5_2_4"/>
<dbReference type="UniPathway" id="UPA00074">
    <property type="reaction ID" value="UER00133"/>
</dbReference>
<dbReference type="UniPathway" id="UPA00074">
    <property type="reaction ID" value="UER00135"/>
</dbReference>
<dbReference type="Proteomes" id="UP000002010">
    <property type="component" value="Chromosome"/>
</dbReference>
<dbReference type="GO" id="GO:0005829">
    <property type="term" value="C:cytosol"/>
    <property type="evidence" value="ECO:0007669"/>
    <property type="project" value="TreeGrafter"/>
</dbReference>
<dbReference type="GO" id="GO:0003937">
    <property type="term" value="F:IMP cyclohydrolase activity"/>
    <property type="evidence" value="ECO:0007669"/>
    <property type="project" value="UniProtKB-UniRule"/>
</dbReference>
<dbReference type="GO" id="GO:0004643">
    <property type="term" value="F:phosphoribosylaminoimidazolecarboxamide formyltransferase activity"/>
    <property type="evidence" value="ECO:0007669"/>
    <property type="project" value="UniProtKB-UniRule"/>
</dbReference>
<dbReference type="GO" id="GO:0006189">
    <property type="term" value="P:'de novo' IMP biosynthetic process"/>
    <property type="evidence" value="ECO:0007669"/>
    <property type="project" value="UniProtKB-UniRule"/>
</dbReference>
<dbReference type="CDD" id="cd01421">
    <property type="entry name" value="IMPCH"/>
    <property type="match status" value="1"/>
</dbReference>
<dbReference type="FunFam" id="3.40.140.20:FF:000001">
    <property type="entry name" value="Bifunctional purine biosynthesis protein PurH"/>
    <property type="match status" value="1"/>
</dbReference>
<dbReference type="FunFam" id="3.40.140.20:FF:000002">
    <property type="entry name" value="Bifunctional purine biosynthesis protein PurH"/>
    <property type="match status" value="1"/>
</dbReference>
<dbReference type="FunFam" id="3.40.50.1380:FF:000001">
    <property type="entry name" value="Bifunctional purine biosynthesis protein PurH"/>
    <property type="match status" value="1"/>
</dbReference>
<dbReference type="Gene3D" id="3.40.140.20">
    <property type="match status" value="2"/>
</dbReference>
<dbReference type="Gene3D" id="3.40.50.1380">
    <property type="entry name" value="Methylglyoxal synthase-like domain"/>
    <property type="match status" value="1"/>
</dbReference>
<dbReference type="HAMAP" id="MF_00139">
    <property type="entry name" value="PurH"/>
    <property type="match status" value="1"/>
</dbReference>
<dbReference type="InterPro" id="IPR024051">
    <property type="entry name" value="AICAR_Tfase_dup_dom_sf"/>
</dbReference>
<dbReference type="InterPro" id="IPR016193">
    <property type="entry name" value="Cytidine_deaminase-like"/>
</dbReference>
<dbReference type="InterPro" id="IPR011607">
    <property type="entry name" value="MGS-like_dom"/>
</dbReference>
<dbReference type="InterPro" id="IPR036914">
    <property type="entry name" value="MGS-like_dom_sf"/>
</dbReference>
<dbReference type="InterPro" id="IPR002695">
    <property type="entry name" value="PurH-like"/>
</dbReference>
<dbReference type="NCBIfam" id="NF002049">
    <property type="entry name" value="PRK00881.1"/>
    <property type="match status" value="1"/>
</dbReference>
<dbReference type="NCBIfam" id="TIGR00355">
    <property type="entry name" value="purH"/>
    <property type="match status" value="1"/>
</dbReference>
<dbReference type="PANTHER" id="PTHR11692:SF0">
    <property type="entry name" value="BIFUNCTIONAL PURINE BIOSYNTHESIS PROTEIN ATIC"/>
    <property type="match status" value="1"/>
</dbReference>
<dbReference type="PANTHER" id="PTHR11692">
    <property type="entry name" value="BIFUNCTIONAL PURINE BIOSYNTHESIS PROTEIN PURH"/>
    <property type="match status" value="1"/>
</dbReference>
<dbReference type="Pfam" id="PF01808">
    <property type="entry name" value="AICARFT_IMPCHas"/>
    <property type="match status" value="1"/>
</dbReference>
<dbReference type="Pfam" id="PF02142">
    <property type="entry name" value="MGS"/>
    <property type="match status" value="1"/>
</dbReference>
<dbReference type="PIRSF" id="PIRSF000414">
    <property type="entry name" value="AICARFT_IMPCHas"/>
    <property type="match status" value="1"/>
</dbReference>
<dbReference type="SMART" id="SM00798">
    <property type="entry name" value="AICARFT_IMPCHas"/>
    <property type="match status" value="1"/>
</dbReference>
<dbReference type="SMART" id="SM00851">
    <property type="entry name" value="MGS"/>
    <property type="match status" value="1"/>
</dbReference>
<dbReference type="SUPFAM" id="SSF53927">
    <property type="entry name" value="Cytidine deaminase-like"/>
    <property type="match status" value="1"/>
</dbReference>
<dbReference type="SUPFAM" id="SSF52335">
    <property type="entry name" value="Methylglyoxal synthase-like"/>
    <property type="match status" value="1"/>
</dbReference>
<dbReference type="PROSITE" id="PS51855">
    <property type="entry name" value="MGS"/>
    <property type="match status" value="1"/>
</dbReference>
<feature type="chain" id="PRO_1000122962" description="Bifunctional purine biosynthesis protein PurH">
    <location>
        <begin position="1"/>
        <end position="526"/>
    </location>
</feature>
<feature type="domain" description="MGS-like" evidence="2">
    <location>
        <begin position="1"/>
        <end position="147"/>
    </location>
</feature>
<evidence type="ECO:0000255" key="1">
    <source>
        <dbReference type="HAMAP-Rule" id="MF_00139"/>
    </source>
</evidence>
<evidence type="ECO:0000255" key="2">
    <source>
        <dbReference type="PROSITE-ProRule" id="PRU01202"/>
    </source>
</evidence>
<gene>
    <name evidence="1" type="primary">purH</name>
    <name type="ordered locus">LHK_03208</name>
</gene>
<name>PUR9_LARHH</name>
<accession>C1D6F1</accession>
<reference key="1">
    <citation type="journal article" date="2009" name="PLoS Genet.">
        <title>The complete genome and proteome of Laribacter hongkongensis reveal potential mechanisms for adaptations to different temperatures and habitats.</title>
        <authorList>
            <person name="Woo P.C.Y."/>
            <person name="Lau S.K.P."/>
            <person name="Tse H."/>
            <person name="Teng J.L.L."/>
            <person name="Curreem S.O."/>
            <person name="Tsang A.K.L."/>
            <person name="Fan R.Y.Y."/>
            <person name="Wong G.K.M."/>
            <person name="Huang Y."/>
            <person name="Loman N.J."/>
            <person name="Snyder L.A.S."/>
            <person name="Cai J.J."/>
            <person name="Huang J.-D."/>
            <person name="Mak W."/>
            <person name="Pallen M.J."/>
            <person name="Lok S."/>
            <person name="Yuen K.-Y."/>
        </authorList>
    </citation>
    <scope>NUCLEOTIDE SEQUENCE [LARGE SCALE GENOMIC DNA]</scope>
    <source>
        <strain>HLHK9</strain>
    </source>
</reference>
<keyword id="KW-0378">Hydrolase</keyword>
<keyword id="KW-0511">Multifunctional enzyme</keyword>
<keyword id="KW-0658">Purine biosynthesis</keyword>
<keyword id="KW-1185">Reference proteome</keyword>
<keyword id="KW-0808">Transferase</keyword>
<comment type="catalytic activity">
    <reaction evidence="1">
        <text>(6R)-10-formyltetrahydrofolate + 5-amino-1-(5-phospho-beta-D-ribosyl)imidazole-4-carboxamide = 5-formamido-1-(5-phospho-D-ribosyl)imidazole-4-carboxamide + (6S)-5,6,7,8-tetrahydrofolate</text>
        <dbReference type="Rhea" id="RHEA:22192"/>
        <dbReference type="ChEBI" id="CHEBI:57453"/>
        <dbReference type="ChEBI" id="CHEBI:58467"/>
        <dbReference type="ChEBI" id="CHEBI:58475"/>
        <dbReference type="ChEBI" id="CHEBI:195366"/>
        <dbReference type="EC" id="2.1.2.3"/>
    </reaction>
</comment>
<comment type="catalytic activity">
    <reaction evidence="1">
        <text>IMP + H2O = 5-formamido-1-(5-phospho-D-ribosyl)imidazole-4-carboxamide</text>
        <dbReference type="Rhea" id="RHEA:18445"/>
        <dbReference type="ChEBI" id="CHEBI:15377"/>
        <dbReference type="ChEBI" id="CHEBI:58053"/>
        <dbReference type="ChEBI" id="CHEBI:58467"/>
        <dbReference type="EC" id="3.5.4.10"/>
    </reaction>
</comment>
<comment type="pathway">
    <text evidence="1">Purine metabolism; IMP biosynthesis via de novo pathway; 5-formamido-1-(5-phospho-D-ribosyl)imidazole-4-carboxamide from 5-amino-1-(5-phospho-D-ribosyl)imidazole-4-carboxamide (10-formyl THF route): step 1/1.</text>
</comment>
<comment type="pathway">
    <text evidence="1">Purine metabolism; IMP biosynthesis via de novo pathway; IMP from 5-formamido-1-(5-phospho-D-ribosyl)imidazole-4-carboxamide: step 1/1.</text>
</comment>
<comment type="domain">
    <text evidence="1">The IMP cyclohydrolase activity resides in the N-terminal region.</text>
</comment>
<comment type="similarity">
    <text evidence="1">Belongs to the PurH family.</text>
</comment>
<organism>
    <name type="scientific">Laribacter hongkongensis (strain HLHK9)</name>
    <dbReference type="NCBI Taxonomy" id="557598"/>
    <lineage>
        <taxon>Bacteria</taxon>
        <taxon>Pseudomonadati</taxon>
        <taxon>Pseudomonadota</taxon>
        <taxon>Betaproteobacteria</taxon>
        <taxon>Neisseriales</taxon>
        <taxon>Aquaspirillaceae</taxon>
        <taxon>Laribacter</taxon>
    </lineage>
</organism>
<proteinExistence type="inferred from homology"/>
<protein>
    <recommendedName>
        <fullName evidence="1">Bifunctional purine biosynthesis protein PurH</fullName>
    </recommendedName>
    <domain>
        <recommendedName>
            <fullName evidence="1">Phosphoribosylaminoimidazolecarboxamide formyltransferase</fullName>
            <ecNumber evidence="1">2.1.2.3</ecNumber>
        </recommendedName>
        <alternativeName>
            <fullName evidence="1">AICAR transformylase</fullName>
        </alternativeName>
    </domain>
    <domain>
        <recommendedName>
            <fullName evidence="1">IMP cyclohydrolase</fullName>
            <ecNumber evidence="1">3.5.4.10</ecNumber>
        </recommendedName>
        <alternativeName>
            <fullName evidence="1">ATIC</fullName>
        </alternativeName>
        <alternativeName>
            <fullName evidence="1">IMP synthase</fullName>
        </alternativeName>
        <alternativeName>
            <fullName evidence="1">Inosinicase</fullName>
        </alternativeName>
    </domain>
</protein>